<protein>
    <recommendedName>
        <fullName evidence="1">Uncharacterized MFS-type transporter YcaD</fullName>
    </recommendedName>
</protein>
<keyword id="KW-0997">Cell inner membrane</keyword>
<keyword id="KW-1003">Cell membrane</keyword>
<keyword id="KW-0472">Membrane</keyword>
<keyword id="KW-1185">Reference proteome</keyword>
<keyword id="KW-0812">Transmembrane</keyword>
<keyword id="KW-1133">Transmembrane helix</keyword>
<keyword id="KW-0813">Transport</keyword>
<reference key="1">
    <citation type="journal article" date="2009" name="PLoS Genet.">
        <title>Organised genome dynamics in the Escherichia coli species results in highly diverse adaptive paths.</title>
        <authorList>
            <person name="Touchon M."/>
            <person name="Hoede C."/>
            <person name="Tenaillon O."/>
            <person name="Barbe V."/>
            <person name="Baeriswyl S."/>
            <person name="Bidet P."/>
            <person name="Bingen E."/>
            <person name="Bonacorsi S."/>
            <person name="Bouchier C."/>
            <person name="Bouvet O."/>
            <person name="Calteau A."/>
            <person name="Chiapello H."/>
            <person name="Clermont O."/>
            <person name="Cruveiller S."/>
            <person name="Danchin A."/>
            <person name="Diard M."/>
            <person name="Dossat C."/>
            <person name="Karoui M.E."/>
            <person name="Frapy E."/>
            <person name="Garry L."/>
            <person name="Ghigo J.M."/>
            <person name="Gilles A.M."/>
            <person name="Johnson J."/>
            <person name="Le Bouguenec C."/>
            <person name="Lescat M."/>
            <person name="Mangenot S."/>
            <person name="Martinez-Jehanne V."/>
            <person name="Matic I."/>
            <person name="Nassif X."/>
            <person name="Oztas S."/>
            <person name="Petit M.A."/>
            <person name="Pichon C."/>
            <person name="Rouy Z."/>
            <person name="Ruf C.S."/>
            <person name="Schneider D."/>
            <person name="Tourret J."/>
            <person name="Vacherie B."/>
            <person name="Vallenet D."/>
            <person name="Medigue C."/>
            <person name="Rocha E.P.C."/>
            <person name="Denamur E."/>
        </authorList>
    </citation>
    <scope>NUCLEOTIDE SEQUENCE [LARGE SCALE GENOMIC DNA]</scope>
    <source>
        <strain>55989 / EAEC</strain>
    </source>
</reference>
<accession>B7LD90</accession>
<gene>
    <name evidence="1" type="primary">ycaD</name>
    <name type="ordered locus">EC55989_0943</name>
</gene>
<organism>
    <name type="scientific">Escherichia coli (strain 55989 / EAEC)</name>
    <dbReference type="NCBI Taxonomy" id="585055"/>
    <lineage>
        <taxon>Bacteria</taxon>
        <taxon>Pseudomonadati</taxon>
        <taxon>Pseudomonadota</taxon>
        <taxon>Gammaproteobacteria</taxon>
        <taxon>Enterobacterales</taxon>
        <taxon>Enterobacteriaceae</taxon>
        <taxon>Escherichia</taxon>
    </lineage>
</organism>
<dbReference type="EMBL" id="CU928145">
    <property type="protein sequence ID" value="CAU96807.1"/>
    <property type="molecule type" value="Genomic_DNA"/>
</dbReference>
<dbReference type="RefSeq" id="WP_000109295.1">
    <property type="nucleotide sequence ID" value="NC_011748.1"/>
</dbReference>
<dbReference type="SMR" id="B7LD90"/>
<dbReference type="KEGG" id="eck:EC55989_0943"/>
<dbReference type="HOGENOM" id="CLU_035018_1_2_6"/>
<dbReference type="Proteomes" id="UP000000746">
    <property type="component" value="Chromosome"/>
</dbReference>
<dbReference type="GO" id="GO:0005886">
    <property type="term" value="C:plasma membrane"/>
    <property type="evidence" value="ECO:0007669"/>
    <property type="project" value="UniProtKB-SubCell"/>
</dbReference>
<dbReference type="GO" id="GO:0022857">
    <property type="term" value="F:transmembrane transporter activity"/>
    <property type="evidence" value="ECO:0007669"/>
    <property type="project" value="UniProtKB-UniRule"/>
</dbReference>
<dbReference type="CDD" id="cd17477">
    <property type="entry name" value="MFS_YcaD_like"/>
    <property type="match status" value="1"/>
</dbReference>
<dbReference type="FunFam" id="1.20.1250.20:FF:000041">
    <property type="entry name" value="Uncharacterized MFS-type transporter YcaD"/>
    <property type="match status" value="1"/>
</dbReference>
<dbReference type="FunFam" id="1.20.1250.20:FF:000066">
    <property type="entry name" value="Uncharacterized MFS-type transporter YcaD"/>
    <property type="match status" value="1"/>
</dbReference>
<dbReference type="Gene3D" id="1.20.1250.20">
    <property type="entry name" value="MFS general substrate transporter like domains"/>
    <property type="match status" value="2"/>
</dbReference>
<dbReference type="HAMAP" id="MF_01149">
    <property type="entry name" value="MFS_YcaD"/>
    <property type="match status" value="1"/>
</dbReference>
<dbReference type="InterPro" id="IPR011701">
    <property type="entry name" value="MFS"/>
</dbReference>
<dbReference type="InterPro" id="IPR020846">
    <property type="entry name" value="MFS_dom"/>
</dbReference>
<dbReference type="InterPro" id="IPR036259">
    <property type="entry name" value="MFS_trans_sf"/>
</dbReference>
<dbReference type="InterPro" id="IPR023745">
    <property type="entry name" value="MFS_YcaD"/>
</dbReference>
<dbReference type="InterPro" id="IPR047200">
    <property type="entry name" value="MFS_YcaD-like"/>
</dbReference>
<dbReference type="NCBIfam" id="NF002962">
    <property type="entry name" value="PRK03633.1"/>
    <property type="match status" value="1"/>
</dbReference>
<dbReference type="PANTHER" id="PTHR23521">
    <property type="entry name" value="TRANSPORTER MFS SUPERFAMILY"/>
    <property type="match status" value="1"/>
</dbReference>
<dbReference type="PANTHER" id="PTHR23521:SF2">
    <property type="entry name" value="TRANSPORTER MFS SUPERFAMILY"/>
    <property type="match status" value="1"/>
</dbReference>
<dbReference type="Pfam" id="PF07690">
    <property type="entry name" value="MFS_1"/>
    <property type="match status" value="1"/>
</dbReference>
<dbReference type="SUPFAM" id="SSF103473">
    <property type="entry name" value="MFS general substrate transporter"/>
    <property type="match status" value="1"/>
</dbReference>
<dbReference type="PROSITE" id="PS50850">
    <property type="entry name" value="MFS"/>
    <property type="match status" value="1"/>
</dbReference>
<sequence length="382" mass="41460">MSTYTRPVMLLLSGLLLLTLAIAVLNTLVPLWLAQEHMSTWQVGVVSSSYFTGNLVGTLLTGYVIKRIGFNRSYYLASFIFAAGCAGLGLMIGFWSWLAWRFVAGVGCAMIWVVVESALMCSGTSRNRGRLLAAYMMVYYVGTFLGQLLVSKVSTELMSVLPWVTGLTLAGILPLLFTRVLNQQAENHDSTSITSMLKLRQARLGVNGCIISGIVLGSLYGLMPLYLNHKGVSNASIGFWMAVLVSAGILGQWPIGRLADKFGRLLVLRVQVFVVILGSIAMLSQAAMAPALFILGAAGFTLYPVAMAWACEKVEHHQLVAMNQALLLSYTVGSLLGPSFTAMLMQNFSDNLLFIMIASVSFIYLLMLLRNAGHTPKPVAHV</sequence>
<feature type="chain" id="PRO_1000164164" description="Uncharacterized MFS-type transporter YcaD">
    <location>
        <begin position="1"/>
        <end position="382"/>
    </location>
</feature>
<feature type="transmembrane region" description="Helical" evidence="1">
    <location>
        <begin position="14"/>
        <end position="34"/>
    </location>
</feature>
<feature type="transmembrane region" description="Helical" evidence="1">
    <location>
        <begin position="45"/>
        <end position="65"/>
    </location>
</feature>
<feature type="transmembrane region" description="Helical" evidence="1">
    <location>
        <begin position="79"/>
        <end position="99"/>
    </location>
</feature>
<feature type="transmembrane region" description="Helical" evidence="1">
    <location>
        <begin position="102"/>
        <end position="122"/>
    </location>
</feature>
<feature type="transmembrane region" description="Helical" evidence="1">
    <location>
        <begin position="131"/>
        <end position="151"/>
    </location>
</feature>
<feature type="transmembrane region" description="Helical" evidence="1">
    <location>
        <begin position="157"/>
        <end position="177"/>
    </location>
</feature>
<feature type="transmembrane region" description="Helical" evidence="1">
    <location>
        <begin position="204"/>
        <end position="224"/>
    </location>
</feature>
<feature type="transmembrane region" description="Helical" evidence="1">
    <location>
        <begin position="235"/>
        <end position="255"/>
    </location>
</feature>
<feature type="transmembrane region" description="Helical" evidence="1">
    <location>
        <begin position="270"/>
        <end position="290"/>
    </location>
</feature>
<feature type="transmembrane region" description="Helical" evidence="1">
    <location>
        <begin position="291"/>
        <end position="311"/>
    </location>
</feature>
<feature type="transmembrane region" description="Helical" evidence="1">
    <location>
        <begin position="325"/>
        <end position="345"/>
    </location>
</feature>
<feature type="transmembrane region" description="Helical" evidence="1">
    <location>
        <begin position="348"/>
        <end position="368"/>
    </location>
</feature>
<name>YCAD_ECO55</name>
<evidence type="ECO:0000255" key="1">
    <source>
        <dbReference type="HAMAP-Rule" id="MF_01149"/>
    </source>
</evidence>
<comment type="subcellular location">
    <subcellularLocation>
        <location evidence="1">Cell inner membrane</location>
        <topology evidence="1">Multi-pass membrane protein</topology>
    </subcellularLocation>
</comment>
<comment type="similarity">
    <text evidence="1">Belongs to the major facilitator superfamily. YcaD (TC 2.A.1.26) family.</text>
</comment>
<proteinExistence type="inferred from homology"/>